<gene>
    <name evidence="4" type="ordered locus">YCR023C</name>
    <name type="ORF">YCR23C</name>
    <name type="ORF">YCR241</name>
</gene>
<keyword id="KW-0868">Chloride</keyword>
<keyword id="KW-0869">Chloride channel</keyword>
<keyword id="KW-0407">Ion channel</keyword>
<keyword id="KW-0406">Ion transport</keyword>
<keyword id="KW-0472">Membrane</keyword>
<keyword id="KW-0597">Phosphoprotein</keyword>
<keyword id="KW-1185">Reference proteome</keyword>
<keyword id="KW-0812">Transmembrane</keyword>
<keyword id="KW-1133">Transmembrane helix</keyword>
<keyword id="KW-0813">Transport</keyword>
<dbReference type="EMBL" id="X59720">
    <property type="protein sequence ID" value="CAC42975.1"/>
    <property type="molecule type" value="Genomic_DNA"/>
</dbReference>
<dbReference type="EMBL" id="BK006937">
    <property type="protein sequence ID" value="DAA07501.1"/>
    <property type="molecule type" value="Genomic_DNA"/>
</dbReference>
<dbReference type="PIR" id="S19434">
    <property type="entry name" value="S19434"/>
</dbReference>
<dbReference type="RefSeq" id="NP_009952.2">
    <property type="nucleotide sequence ID" value="NM_001178737.1"/>
</dbReference>
<dbReference type="BioGRID" id="31005">
    <property type="interactions" value="60"/>
</dbReference>
<dbReference type="DIP" id="DIP-1960N"/>
<dbReference type="FunCoup" id="P25351">
    <property type="interactions" value="130"/>
</dbReference>
<dbReference type="STRING" id="4932.YCR023C"/>
<dbReference type="iPTMnet" id="P25351"/>
<dbReference type="PaxDb" id="4932-YCR023C"/>
<dbReference type="PeptideAtlas" id="P25351"/>
<dbReference type="EnsemblFungi" id="YCR023C_mRNA">
    <property type="protein sequence ID" value="YCR023C"/>
    <property type="gene ID" value="YCR023C"/>
</dbReference>
<dbReference type="GeneID" id="850387"/>
<dbReference type="KEGG" id="sce:YCR023C"/>
<dbReference type="AGR" id="SGD:S000000617"/>
<dbReference type="SGD" id="S000000617">
    <property type="gene designation" value="YCR023C"/>
</dbReference>
<dbReference type="VEuPathDB" id="FungiDB:YCR023C"/>
<dbReference type="eggNOG" id="KOG2615">
    <property type="taxonomic scope" value="Eukaryota"/>
</dbReference>
<dbReference type="HOGENOM" id="CLU_001265_54_5_1"/>
<dbReference type="InParanoid" id="P25351"/>
<dbReference type="OMA" id="PQIMLLI"/>
<dbReference type="OrthoDB" id="10262656at2759"/>
<dbReference type="BioCyc" id="YEAST:G3O-29338-MONOMER"/>
<dbReference type="BioGRID-ORCS" id="850387">
    <property type="hits" value="1 hit in 10 CRISPR screens"/>
</dbReference>
<dbReference type="PRO" id="PR:P25351"/>
<dbReference type="Proteomes" id="UP000002311">
    <property type="component" value="Chromosome III"/>
</dbReference>
<dbReference type="RNAct" id="P25351">
    <property type="molecule type" value="protein"/>
</dbReference>
<dbReference type="GO" id="GO:0034707">
    <property type="term" value="C:chloride channel complex"/>
    <property type="evidence" value="ECO:0007669"/>
    <property type="project" value="UniProtKB-KW"/>
</dbReference>
<dbReference type="GO" id="GO:0000329">
    <property type="term" value="C:fungal-type vacuole membrane"/>
    <property type="evidence" value="ECO:0000314"/>
    <property type="project" value="SGD"/>
</dbReference>
<dbReference type="GO" id="GO:0005254">
    <property type="term" value="F:chloride channel activity"/>
    <property type="evidence" value="ECO:0000314"/>
    <property type="project" value="UniProtKB"/>
</dbReference>
<dbReference type="CDD" id="cd17330">
    <property type="entry name" value="MFS_SLC46_TetA_like"/>
    <property type="match status" value="1"/>
</dbReference>
<dbReference type="Gene3D" id="1.20.1250.20">
    <property type="entry name" value="MFS general substrate transporter like domains"/>
    <property type="match status" value="1"/>
</dbReference>
<dbReference type="InterPro" id="IPR011701">
    <property type="entry name" value="MFS"/>
</dbReference>
<dbReference type="InterPro" id="IPR020846">
    <property type="entry name" value="MFS_dom"/>
</dbReference>
<dbReference type="InterPro" id="IPR036259">
    <property type="entry name" value="MFS_trans_sf"/>
</dbReference>
<dbReference type="PANTHER" id="PTHR23504:SF15">
    <property type="entry name" value="MAJOR FACILITATOR SUPERFAMILY (MFS) PROFILE DOMAIN-CONTAINING PROTEIN"/>
    <property type="match status" value="1"/>
</dbReference>
<dbReference type="PANTHER" id="PTHR23504">
    <property type="entry name" value="MAJOR FACILITATOR SUPERFAMILY DOMAIN-CONTAINING PROTEIN 10"/>
    <property type="match status" value="1"/>
</dbReference>
<dbReference type="Pfam" id="PF07690">
    <property type="entry name" value="MFS_1"/>
    <property type="match status" value="1"/>
</dbReference>
<dbReference type="SUPFAM" id="SSF103473">
    <property type="entry name" value="MFS general substrate transporter"/>
    <property type="match status" value="1"/>
</dbReference>
<dbReference type="PROSITE" id="PS50850">
    <property type="entry name" value="MFS"/>
    <property type="match status" value="1"/>
</dbReference>
<name>YCR3_YEAST</name>
<accession>P25351</accession>
<accession>D6VR32</accession>
<accession>Q8NKJ7</accession>
<proteinExistence type="evidence at protein level"/>
<feature type="chain" id="PRO_0000173425" description="Major facilitator superfamily domain-containing protein YCR023C">
    <location>
        <begin position="1"/>
        <end position="611"/>
    </location>
</feature>
<feature type="topological domain" description="Extracellular" evidence="1">
    <location>
        <begin position="1"/>
        <end position="89"/>
    </location>
</feature>
<feature type="transmembrane region" description="Helical" evidence="1">
    <location>
        <begin position="90"/>
        <end position="110"/>
    </location>
</feature>
<feature type="topological domain" description="Cytoplasmic" evidence="1">
    <location>
        <begin position="111"/>
        <end position="152"/>
    </location>
</feature>
<feature type="transmembrane region" description="Helical" evidence="1">
    <location>
        <begin position="153"/>
        <end position="173"/>
    </location>
</feature>
<feature type="topological domain" description="Extracellular" evidence="1">
    <location>
        <begin position="174"/>
        <end position="199"/>
    </location>
</feature>
<feature type="transmembrane region" description="Helical" evidence="1">
    <location>
        <begin position="200"/>
        <end position="220"/>
    </location>
</feature>
<feature type="topological domain" description="Cytoplasmic" evidence="1">
    <location>
        <begin position="221"/>
        <end position="353"/>
    </location>
</feature>
<feature type="transmembrane region" description="Helical" evidence="1">
    <location>
        <begin position="354"/>
        <end position="372"/>
    </location>
</feature>
<feature type="topological domain" description="Extracellular" evidence="1">
    <location>
        <begin position="373"/>
        <end position="413"/>
    </location>
</feature>
<feature type="transmembrane region" description="Helical" evidence="1">
    <location>
        <begin position="414"/>
        <end position="434"/>
    </location>
</feature>
<feature type="topological domain" description="Cytoplasmic" evidence="1">
    <location>
        <begin position="435"/>
        <end position="442"/>
    </location>
</feature>
<feature type="transmembrane region" description="Helical" evidence="1">
    <location>
        <begin position="443"/>
        <end position="463"/>
    </location>
</feature>
<feature type="topological domain" description="Extracellular" evidence="1">
    <location>
        <begin position="464"/>
        <end position="542"/>
    </location>
</feature>
<feature type="transmembrane region" description="Helical" evidence="1">
    <location>
        <begin position="543"/>
        <end position="563"/>
    </location>
</feature>
<feature type="topological domain" description="Cytoplasmic" evidence="1">
    <location>
        <begin position="564"/>
        <end position="611"/>
    </location>
</feature>
<feature type="region of interest" description="Disordered" evidence="2">
    <location>
        <begin position="261"/>
        <end position="301"/>
    </location>
</feature>
<feature type="compositionally biased region" description="Basic and acidic residues" evidence="2">
    <location>
        <begin position="261"/>
        <end position="271"/>
    </location>
</feature>
<feature type="modified residue" description="Phosphoserine" evidence="6">
    <location>
        <position position="313"/>
    </location>
</feature>
<feature type="modified residue" description="Phosphoserine" evidence="7">
    <location>
        <position position="603"/>
    </location>
</feature>
<sequence length="611" mass="69218">MARQKLTFKEQMDGFPWVQLVVVSLVRFSEPIAFSSLFPYVYFMVRDFNIAPNDAQVSKYSGYLSSSFALCQVISAYHWGRFSEKHGRKITLTCGLIGTSVSLLILGFSRNFYQALVARSLMGLLNGNVGVIRTIIGEIATERKHQALAFSTMPLLFQFGAVVGPMIGGFLVFRDGTMNEVPLWFPHFAKRIIRSYPYALPNVVVCMFLMFGLTNATLFLEETHPAFKDRRDYGLEVGDFIKKNIFGIQPKRRPWQKRIQDDSENIHHRNENVNSIRGQDSEEDENSPLVNTTNDDDTESIQSIDPILTRRQSVGLIRTYSLHEPTDAVHANIDTAPDGCKESSIFHHVFHTKVFYPISVNFIMALHLIVYNEFLPVFLAYDLAVDPENPKKLASKFPWKISGGIGYEPEQTGTLLSTTGIFGCFVVIFIFPIVDRNFDCLTIFRTLVKLYPIMYVMVPYVVFLQNERIPSWYTVVYLYIITGIKTFCGALTSPQIMLLIHNSSPLSCRSVINGATISISASARFIGPLVWGYIMSWSQQNDVAWVSWWSLSLFCMVALYQSYKIAPIDDNENELHGQGSEDAYNSQSQSSDLRMAHRSSLSSLSNQRCTT</sequence>
<reference key="1">
    <citation type="journal article" date="1992" name="Yeast">
        <title>The complete sequence of K3B, a 7.9 kb fragment between PGK1 and CRY1 on chromosome III, reveals the presence of seven open reading frames.</title>
        <authorList>
            <person name="Bolle P.-A."/>
            <person name="Gilliquet V."/>
            <person name="Berben G."/>
            <person name="Dumont J."/>
            <person name="Hilger F."/>
        </authorList>
    </citation>
    <scope>NUCLEOTIDE SEQUENCE [GENOMIC DNA]</scope>
</reference>
<reference key="2">
    <citation type="journal article" date="1992" name="Nature">
        <title>The complete DNA sequence of yeast chromosome III.</title>
        <authorList>
            <person name="Oliver S.G."/>
            <person name="van der Aart Q.J.M."/>
            <person name="Agostoni-Carbone M.L."/>
            <person name="Aigle M."/>
            <person name="Alberghina L."/>
            <person name="Alexandraki D."/>
            <person name="Antoine G."/>
            <person name="Anwar R."/>
            <person name="Ballesta J.P.G."/>
            <person name="Benit P."/>
            <person name="Berben G."/>
            <person name="Bergantino E."/>
            <person name="Biteau N."/>
            <person name="Bolle P.-A."/>
            <person name="Bolotin-Fukuhara M."/>
            <person name="Brown A."/>
            <person name="Brown A.J.P."/>
            <person name="Buhler J.-M."/>
            <person name="Carcano C."/>
            <person name="Carignani G."/>
            <person name="Cederberg H."/>
            <person name="Chanet R."/>
            <person name="Contreras R."/>
            <person name="Crouzet M."/>
            <person name="Daignan-Fornier B."/>
            <person name="Defoor E."/>
            <person name="Delgado M.D."/>
            <person name="Demolder J."/>
            <person name="Doira C."/>
            <person name="Dubois E."/>
            <person name="Dujon B."/>
            <person name="Duesterhoeft A."/>
            <person name="Erdmann D."/>
            <person name="Esteban M."/>
            <person name="Fabre F."/>
            <person name="Fairhead C."/>
            <person name="Faye G."/>
            <person name="Feldmann H."/>
            <person name="Fiers W."/>
            <person name="Francingues-Gaillard M.-C."/>
            <person name="Franco L."/>
            <person name="Frontali L."/>
            <person name="Fukuhara H."/>
            <person name="Fuller L.J."/>
            <person name="Galland P."/>
            <person name="Gent M.E."/>
            <person name="Gigot D."/>
            <person name="Gilliquet V."/>
            <person name="Glansdorff N."/>
            <person name="Goffeau A."/>
            <person name="Grenson M."/>
            <person name="Grisanti P."/>
            <person name="Grivell L.A."/>
            <person name="de Haan M."/>
            <person name="Haasemann M."/>
            <person name="Hatat D."/>
            <person name="Hoenicka J."/>
            <person name="Hegemann J.H."/>
            <person name="Herbert C.J."/>
            <person name="Hilger F."/>
            <person name="Hohmann S."/>
            <person name="Hollenberg C.P."/>
            <person name="Huse K."/>
            <person name="Iborra F."/>
            <person name="Indge K.J."/>
            <person name="Isono K."/>
            <person name="Jacq C."/>
            <person name="Jacquet M."/>
            <person name="James C.M."/>
            <person name="Jauniaux J.-C."/>
            <person name="Jia Y."/>
            <person name="Jimenez A."/>
            <person name="Kelly A."/>
            <person name="Kleinhans U."/>
            <person name="Kreisl P."/>
            <person name="Lanfranchi G."/>
            <person name="Lewis C."/>
            <person name="van der Linden C.G."/>
            <person name="Lucchini G."/>
            <person name="Lutzenkirchen K."/>
            <person name="Maat M.J."/>
            <person name="Mallet L."/>
            <person name="Mannhaupt G."/>
            <person name="Martegani E."/>
            <person name="Mathieu A."/>
            <person name="Maurer C.T.C."/>
            <person name="McConnell D."/>
            <person name="McKee R.A."/>
            <person name="Messenguy F."/>
            <person name="Mewes H.-W."/>
            <person name="Molemans F."/>
            <person name="Montague M.A."/>
            <person name="Muzi Falconi M."/>
            <person name="Navas L."/>
            <person name="Newlon C.S."/>
            <person name="Noone D."/>
            <person name="Pallier C."/>
            <person name="Panzeri L."/>
            <person name="Pearson B.M."/>
            <person name="Perea J."/>
            <person name="Philippsen P."/>
            <person name="Pierard A."/>
            <person name="Planta R.J."/>
            <person name="Plevani P."/>
            <person name="Poetsch B."/>
            <person name="Pohl F.M."/>
            <person name="Purnelle B."/>
            <person name="Ramezani Rad M."/>
            <person name="Rasmussen S.W."/>
            <person name="Raynal A."/>
            <person name="Remacha M.A."/>
            <person name="Richterich P."/>
            <person name="Roberts A.B."/>
            <person name="Rodriguez F."/>
            <person name="Sanz E."/>
            <person name="Schaaff-Gerstenschlaeger I."/>
            <person name="Scherens B."/>
            <person name="Schweitzer B."/>
            <person name="Shu Y."/>
            <person name="Skala J."/>
            <person name="Slonimski P.P."/>
            <person name="Sor F."/>
            <person name="Soustelle C."/>
            <person name="Spiegelberg R."/>
            <person name="Stateva L.I."/>
            <person name="Steensma H.Y."/>
            <person name="Steiner S."/>
            <person name="Thierry A."/>
            <person name="Thireos G."/>
            <person name="Tzermia M."/>
            <person name="Urrestarazu L.A."/>
            <person name="Valle G."/>
            <person name="Vetter I."/>
            <person name="van Vliet-Reedijk J.C."/>
            <person name="Voet M."/>
            <person name="Volckaert G."/>
            <person name="Vreken P."/>
            <person name="Wang H."/>
            <person name="Warmington J.R."/>
            <person name="von Wettstein D."/>
            <person name="Wicksteed B.L."/>
            <person name="Wilson C."/>
            <person name="Wurst H."/>
            <person name="Xu G."/>
            <person name="Yoshikawa A."/>
            <person name="Zimmermann F.K."/>
            <person name="Sgouros J.G."/>
        </authorList>
    </citation>
    <scope>NUCLEOTIDE SEQUENCE [LARGE SCALE GENOMIC DNA]</scope>
    <source>
        <strain>ATCC 204508 / S288c</strain>
    </source>
</reference>
<reference key="3">
    <citation type="submission" date="2001-06" db="EMBL/GenBank/DDBJ databases">
        <authorList>
            <person name="Valles G."/>
            <person name="Volckaerts G."/>
        </authorList>
    </citation>
    <scope>SEQUENCE REVISION</scope>
</reference>
<reference key="4">
    <citation type="journal article" date="2014" name="G3 (Bethesda)">
        <title>The reference genome sequence of Saccharomyces cerevisiae: Then and now.</title>
        <authorList>
            <person name="Engel S.R."/>
            <person name="Dietrich F.S."/>
            <person name="Fisk D.G."/>
            <person name="Binkley G."/>
            <person name="Balakrishnan R."/>
            <person name="Costanzo M.C."/>
            <person name="Dwight S.S."/>
            <person name="Hitz B.C."/>
            <person name="Karra K."/>
            <person name="Nash R.S."/>
            <person name="Weng S."/>
            <person name="Wong E.D."/>
            <person name="Lloyd P."/>
            <person name="Skrzypek M.S."/>
            <person name="Miyasato S.R."/>
            <person name="Simison M."/>
            <person name="Cherry J.M."/>
        </authorList>
    </citation>
    <scope>GENOME REANNOTATION</scope>
    <source>
        <strain>ATCC 204508 / S288c</strain>
    </source>
</reference>
<reference key="5">
    <citation type="journal article" date="2005" name="Mol. Cell. Proteomics">
        <title>Quantitative phosphoproteomics applied to the yeast pheromone signaling pathway.</title>
        <authorList>
            <person name="Gruhler A."/>
            <person name="Olsen J.V."/>
            <person name="Mohammed S."/>
            <person name="Mortensen P."/>
            <person name="Faergeman N.J."/>
            <person name="Mann M."/>
            <person name="Jensen O.N."/>
        </authorList>
    </citation>
    <scope>IDENTIFICATION BY MASS SPECTROMETRY [LARGE SCALE ANALYSIS]</scope>
    <source>
        <strain>YAL6B</strain>
    </source>
</reference>
<reference key="6">
    <citation type="journal article" date="2006" name="Proc. Natl. Acad. Sci. U.S.A.">
        <title>A global topology map of the Saccharomyces cerevisiae membrane proteome.</title>
        <authorList>
            <person name="Kim H."/>
            <person name="Melen K."/>
            <person name="Oesterberg M."/>
            <person name="von Heijne G."/>
        </authorList>
    </citation>
    <scope>TOPOLOGY [LARGE SCALE ANALYSIS]</scope>
    <source>
        <strain>ATCC 208353 / W303-1A</strain>
    </source>
</reference>
<reference key="7">
    <citation type="journal article" date="2007" name="J. Proteome Res.">
        <title>Large-scale phosphorylation analysis of alpha-factor-arrested Saccharomyces cerevisiae.</title>
        <authorList>
            <person name="Li X."/>
            <person name="Gerber S.A."/>
            <person name="Rudner A.D."/>
            <person name="Beausoleil S.A."/>
            <person name="Haas W."/>
            <person name="Villen J."/>
            <person name="Elias J.E."/>
            <person name="Gygi S.P."/>
        </authorList>
    </citation>
    <scope>PHOSPHORYLATION [LARGE SCALE ANALYSIS] AT SER-313</scope>
    <scope>IDENTIFICATION BY MASS SPECTROMETRY [LARGE SCALE ANALYSIS]</scope>
    <source>
        <strain>ADR376</strain>
    </source>
</reference>
<reference key="8">
    <citation type="journal article" date="2008" name="Mol. Cell. Proteomics">
        <title>A multidimensional chromatography technology for in-depth phosphoproteome analysis.</title>
        <authorList>
            <person name="Albuquerque C.P."/>
            <person name="Smolka M.B."/>
            <person name="Payne S.H."/>
            <person name="Bafna V."/>
            <person name="Eng J."/>
            <person name="Zhou H."/>
        </authorList>
    </citation>
    <scope>IDENTIFICATION BY MASS SPECTROMETRY [LARGE SCALE ANALYSIS]</scope>
</reference>
<reference key="9">
    <citation type="journal article" date="2009" name="Science">
        <title>Global analysis of Cdk1 substrate phosphorylation sites provides insights into evolution.</title>
        <authorList>
            <person name="Holt L.J."/>
            <person name="Tuch B.B."/>
            <person name="Villen J."/>
            <person name="Johnson A.D."/>
            <person name="Gygi S.P."/>
            <person name="Morgan D.O."/>
        </authorList>
    </citation>
    <scope>PHOSPHORYLATION [LARGE SCALE ANALYSIS] AT SER-603</scope>
    <scope>IDENTIFICATION BY MASS SPECTROMETRY [LARGE SCALE ANALYSIS]</scope>
</reference>
<reference key="10">
    <citation type="journal article" date="2021" name="Sci. Adv.">
        <title>CLN7 is an organellar chloride channel regulating lysosomal function.</title>
        <authorList>
            <person name="Wang Y."/>
            <person name="Zeng W."/>
            <person name="Lin B."/>
            <person name="Yao Y."/>
            <person name="Li C."/>
            <person name="Hu W."/>
            <person name="Wu H."/>
            <person name="Huang J."/>
            <person name="Zhang M."/>
            <person name="Xue T."/>
            <person name="Ren D."/>
            <person name="Qu L."/>
            <person name="Cang C."/>
        </authorList>
    </citation>
    <scope>FUNCTION</scope>
    <scope>TRANSPORTER ACTIVITY</scope>
    <scope>SUBCELLULAR LOCATION</scope>
</reference>
<evidence type="ECO:0000255" key="1"/>
<evidence type="ECO:0000256" key="2">
    <source>
        <dbReference type="SAM" id="MobiDB-lite"/>
    </source>
</evidence>
<evidence type="ECO:0000269" key="3">
    <source>
    </source>
</evidence>
<evidence type="ECO:0000303" key="4">
    <source>
    </source>
</evidence>
<evidence type="ECO:0000305" key="5"/>
<evidence type="ECO:0007744" key="6">
    <source>
    </source>
</evidence>
<evidence type="ECO:0007744" key="7">
    <source>
    </source>
</evidence>
<protein>
    <recommendedName>
        <fullName>Major facilitator superfamily domain-containing protein YCR023C</fullName>
    </recommendedName>
    <alternativeName>
        <fullName>Chloride channel protein YCR023C</fullName>
    </alternativeName>
</protein>
<organism>
    <name type="scientific">Saccharomyces cerevisiae (strain ATCC 204508 / S288c)</name>
    <name type="common">Baker's yeast</name>
    <dbReference type="NCBI Taxonomy" id="559292"/>
    <lineage>
        <taxon>Eukaryota</taxon>
        <taxon>Fungi</taxon>
        <taxon>Dikarya</taxon>
        <taxon>Ascomycota</taxon>
        <taxon>Saccharomycotina</taxon>
        <taxon>Saccharomycetes</taxon>
        <taxon>Saccharomycetales</taxon>
        <taxon>Saccharomycetaceae</taxon>
        <taxon>Saccharomyces</taxon>
    </lineage>
</organism>
<comment type="function">
    <text evidence="3">Outward-rectifying chloride channel involved in chloride homeostasis.</text>
</comment>
<comment type="catalytic activity">
    <reaction evidence="3">
        <text>chloride(in) = chloride(out)</text>
        <dbReference type="Rhea" id="RHEA:29823"/>
        <dbReference type="ChEBI" id="CHEBI:17996"/>
    </reaction>
</comment>
<comment type="subcellular location">
    <subcellularLocation>
        <location evidence="3">Membrane</location>
        <topology evidence="1">Multi-pass membrane protein</topology>
    </subcellularLocation>
</comment>
<comment type="similarity">
    <text evidence="5">Belongs to the major facilitator superfamily.</text>
</comment>